<comment type="function">
    <text evidence="1">Involved in iron-sulfur cluster biogenesis. Binds a 4Fe-4S cluster, can transfer this cluster to apoproteins, and thereby intervenes in the maturation of Fe/S proteins. Could also act as a scaffold/chaperone for damaged Fe/S proteins.</text>
</comment>
<comment type="cofactor">
    <cofactor evidence="1">
        <name>[4Fe-4S] cluster</name>
        <dbReference type="ChEBI" id="CHEBI:49883"/>
    </cofactor>
    <text evidence="1">Binds 1 [4Fe-4S] cluster per subunit. The cluster is presumably bound at the interface of two monomers.</text>
</comment>
<comment type="subunit">
    <text evidence="1">Homodimer.</text>
</comment>
<comment type="similarity">
    <text evidence="1">Belongs to the NfuA family.</text>
</comment>
<sequence>MISISDTAQAHFCKLLEKQEPDTNIRVFVVNPGTPSAECGVSYCPPDAVESTDTTLEFNGFDAVVDAESAPFLSEAEIDFVTDQMGSQLTLKAPNAKARKVDDDAPLEERINYMIEAEINPQLASHGGKVMLMEITEKGEAILQFGGGCNGCSMVDVTLKDGIEKQMLAQFSGELTAVKDATEHEAGEHSYY</sequence>
<keyword id="KW-0004">4Fe-4S</keyword>
<keyword id="KW-0408">Iron</keyword>
<keyword id="KW-0411">Iron-sulfur</keyword>
<keyword id="KW-0479">Metal-binding</keyword>
<gene>
    <name evidence="1" type="primary">nfuA</name>
    <name type="ordered locus">Patl_4233</name>
</gene>
<dbReference type="EMBL" id="CP000388">
    <property type="protein sequence ID" value="ABG42732.1"/>
    <property type="molecule type" value="Genomic_DNA"/>
</dbReference>
<dbReference type="RefSeq" id="WP_011576918.1">
    <property type="nucleotide sequence ID" value="NC_008228.1"/>
</dbReference>
<dbReference type="SMR" id="Q15N06"/>
<dbReference type="STRING" id="342610.Patl_4233"/>
<dbReference type="KEGG" id="pat:Patl_4233"/>
<dbReference type="eggNOG" id="COG0316">
    <property type="taxonomic scope" value="Bacteria"/>
</dbReference>
<dbReference type="eggNOG" id="COG0694">
    <property type="taxonomic scope" value="Bacteria"/>
</dbReference>
<dbReference type="HOGENOM" id="CLU_094569_0_0_6"/>
<dbReference type="OrthoDB" id="9785450at2"/>
<dbReference type="Proteomes" id="UP000001981">
    <property type="component" value="Chromosome"/>
</dbReference>
<dbReference type="GO" id="GO:0051539">
    <property type="term" value="F:4 iron, 4 sulfur cluster binding"/>
    <property type="evidence" value="ECO:0007669"/>
    <property type="project" value="UniProtKB-UniRule"/>
</dbReference>
<dbReference type="GO" id="GO:0005506">
    <property type="term" value="F:iron ion binding"/>
    <property type="evidence" value="ECO:0007669"/>
    <property type="project" value="InterPro"/>
</dbReference>
<dbReference type="GO" id="GO:0016226">
    <property type="term" value="P:iron-sulfur cluster assembly"/>
    <property type="evidence" value="ECO:0007669"/>
    <property type="project" value="UniProtKB-UniRule"/>
</dbReference>
<dbReference type="GO" id="GO:0051604">
    <property type="term" value="P:protein maturation"/>
    <property type="evidence" value="ECO:0007669"/>
    <property type="project" value="UniProtKB-UniRule"/>
</dbReference>
<dbReference type="Gene3D" id="3.30.300.130">
    <property type="entry name" value="Fe-S cluster assembly (FSCA)"/>
    <property type="match status" value="1"/>
</dbReference>
<dbReference type="Gene3D" id="2.60.300.12">
    <property type="entry name" value="HesB-like domain"/>
    <property type="match status" value="1"/>
</dbReference>
<dbReference type="HAMAP" id="MF_01637">
    <property type="entry name" value="Fe_S_biogen_NfuA"/>
    <property type="match status" value="1"/>
</dbReference>
<dbReference type="InterPro" id="IPR017726">
    <property type="entry name" value="Fe/S_biogenesis_protein_NfuA"/>
</dbReference>
<dbReference type="InterPro" id="IPR000361">
    <property type="entry name" value="FeS_biogenesis"/>
</dbReference>
<dbReference type="InterPro" id="IPR034904">
    <property type="entry name" value="FSCA_dom_sf"/>
</dbReference>
<dbReference type="InterPro" id="IPR035903">
    <property type="entry name" value="HesB-like_dom_sf"/>
</dbReference>
<dbReference type="InterPro" id="IPR001075">
    <property type="entry name" value="NIF_FeS_clus_asmbl_NifU_C"/>
</dbReference>
<dbReference type="NCBIfam" id="NF008392">
    <property type="entry name" value="PRK11190.1"/>
    <property type="match status" value="1"/>
</dbReference>
<dbReference type="NCBIfam" id="TIGR03341">
    <property type="entry name" value="YhgI_GntY"/>
    <property type="match status" value="1"/>
</dbReference>
<dbReference type="PANTHER" id="PTHR11178:SF51">
    <property type="entry name" value="FE_S BIOGENESIS PROTEIN NFUA"/>
    <property type="match status" value="1"/>
</dbReference>
<dbReference type="PANTHER" id="PTHR11178">
    <property type="entry name" value="IRON-SULFUR CLUSTER SCAFFOLD PROTEIN NFU-RELATED"/>
    <property type="match status" value="1"/>
</dbReference>
<dbReference type="Pfam" id="PF01521">
    <property type="entry name" value="Fe-S_biosyn"/>
    <property type="match status" value="1"/>
</dbReference>
<dbReference type="Pfam" id="PF01106">
    <property type="entry name" value="NifU"/>
    <property type="match status" value="1"/>
</dbReference>
<dbReference type="SUPFAM" id="SSF117916">
    <property type="entry name" value="Fe-S cluster assembly (FSCA) domain-like"/>
    <property type="match status" value="1"/>
</dbReference>
<dbReference type="SUPFAM" id="SSF89360">
    <property type="entry name" value="HesB-like domain"/>
    <property type="match status" value="1"/>
</dbReference>
<reference key="1">
    <citation type="submission" date="2006-06" db="EMBL/GenBank/DDBJ databases">
        <title>Complete sequence of Pseudoalteromonas atlantica T6c.</title>
        <authorList>
            <consortium name="US DOE Joint Genome Institute"/>
            <person name="Copeland A."/>
            <person name="Lucas S."/>
            <person name="Lapidus A."/>
            <person name="Barry K."/>
            <person name="Detter J.C."/>
            <person name="Glavina del Rio T."/>
            <person name="Hammon N."/>
            <person name="Israni S."/>
            <person name="Dalin E."/>
            <person name="Tice H."/>
            <person name="Pitluck S."/>
            <person name="Saunders E."/>
            <person name="Brettin T."/>
            <person name="Bruce D."/>
            <person name="Han C."/>
            <person name="Tapia R."/>
            <person name="Gilna P."/>
            <person name="Schmutz J."/>
            <person name="Larimer F."/>
            <person name="Land M."/>
            <person name="Hauser L."/>
            <person name="Kyrpides N."/>
            <person name="Kim E."/>
            <person name="Karls A.C."/>
            <person name="Bartlett D."/>
            <person name="Higgins B.P."/>
            <person name="Richardson P."/>
        </authorList>
    </citation>
    <scope>NUCLEOTIDE SEQUENCE [LARGE SCALE GENOMIC DNA]</scope>
    <source>
        <strain>T6c / ATCC BAA-1087</strain>
    </source>
</reference>
<accession>Q15N06</accession>
<protein>
    <recommendedName>
        <fullName evidence="1">Fe/S biogenesis protein NfuA</fullName>
    </recommendedName>
</protein>
<organism>
    <name type="scientific">Pseudoalteromonas atlantica (strain T6c / ATCC BAA-1087)</name>
    <dbReference type="NCBI Taxonomy" id="3042615"/>
    <lineage>
        <taxon>Bacteria</taxon>
        <taxon>Pseudomonadati</taxon>
        <taxon>Pseudomonadota</taxon>
        <taxon>Gammaproteobacteria</taxon>
        <taxon>Alteromonadales</taxon>
        <taxon>Alteromonadaceae</taxon>
        <taxon>Paraglaciecola</taxon>
    </lineage>
</organism>
<feature type="chain" id="PRO_0000268235" description="Fe/S biogenesis protein NfuA">
    <location>
        <begin position="1"/>
        <end position="192"/>
    </location>
</feature>
<feature type="binding site" evidence="1">
    <location>
        <position position="149"/>
    </location>
    <ligand>
        <name>[4Fe-4S] cluster</name>
        <dbReference type="ChEBI" id="CHEBI:49883"/>
    </ligand>
</feature>
<feature type="binding site" evidence="1">
    <location>
        <position position="152"/>
    </location>
    <ligand>
        <name>[4Fe-4S] cluster</name>
        <dbReference type="ChEBI" id="CHEBI:49883"/>
    </ligand>
</feature>
<proteinExistence type="inferred from homology"/>
<name>NFUA_PSEA6</name>
<evidence type="ECO:0000255" key="1">
    <source>
        <dbReference type="HAMAP-Rule" id="MF_01637"/>
    </source>
</evidence>